<gene>
    <name evidence="1" type="primary">gltX</name>
    <name type="ordered locus">BB4371</name>
</gene>
<name>SYE_BORBR</name>
<keyword id="KW-0030">Aminoacyl-tRNA synthetase</keyword>
<keyword id="KW-0067">ATP-binding</keyword>
<keyword id="KW-0963">Cytoplasm</keyword>
<keyword id="KW-0436">Ligase</keyword>
<keyword id="KW-0547">Nucleotide-binding</keyword>
<keyword id="KW-0648">Protein biosynthesis</keyword>
<proteinExistence type="inferred from homology"/>
<reference key="1">
    <citation type="journal article" date="2003" name="Nat. Genet.">
        <title>Comparative analysis of the genome sequences of Bordetella pertussis, Bordetella parapertussis and Bordetella bronchiseptica.</title>
        <authorList>
            <person name="Parkhill J."/>
            <person name="Sebaihia M."/>
            <person name="Preston A."/>
            <person name="Murphy L.D."/>
            <person name="Thomson N.R."/>
            <person name="Harris D.E."/>
            <person name="Holden M.T.G."/>
            <person name="Churcher C.M."/>
            <person name="Bentley S.D."/>
            <person name="Mungall K.L."/>
            <person name="Cerdeno-Tarraga A.-M."/>
            <person name="Temple L."/>
            <person name="James K.D."/>
            <person name="Harris B."/>
            <person name="Quail M.A."/>
            <person name="Achtman M."/>
            <person name="Atkin R."/>
            <person name="Baker S."/>
            <person name="Basham D."/>
            <person name="Bason N."/>
            <person name="Cherevach I."/>
            <person name="Chillingworth T."/>
            <person name="Collins M."/>
            <person name="Cronin A."/>
            <person name="Davis P."/>
            <person name="Doggett J."/>
            <person name="Feltwell T."/>
            <person name="Goble A."/>
            <person name="Hamlin N."/>
            <person name="Hauser H."/>
            <person name="Holroyd S."/>
            <person name="Jagels K."/>
            <person name="Leather S."/>
            <person name="Moule S."/>
            <person name="Norberczak H."/>
            <person name="O'Neil S."/>
            <person name="Ormond D."/>
            <person name="Price C."/>
            <person name="Rabbinowitsch E."/>
            <person name="Rutter S."/>
            <person name="Sanders M."/>
            <person name="Saunders D."/>
            <person name="Seeger K."/>
            <person name="Sharp S."/>
            <person name="Simmonds M."/>
            <person name="Skelton J."/>
            <person name="Squares R."/>
            <person name="Squares S."/>
            <person name="Stevens K."/>
            <person name="Unwin L."/>
            <person name="Whitehead S."/>
            <person name="Barrell B.G."/>
            <person name="Maskell D.J."/>
        </authorList>
    </citation>
    <scope>NUCLEOTIDE SEQUENCE [LARGE SCALE GENOMIC DNA]</scope>
    <source>
        <strain>ATCC BAA-588 / NCTC 13252 / RB50</strain>
    </source>
</reference>
<evidence type="ECO:0000255" key="1">
    <source>
        <dbReference type="HAMAP-Rule" id="MF_00022"/>
    </source>
</evidence>
<evidence type="ECO:0000256" key="2">
    <source>
        <dbReference type="SAM" id="MobiDB-lite"/>
    </source>
</evidence>
<accession>Q7WFA9</accession>
<protein>
    <recommendedName>
        <fullName evidence="1">Glutamate--tRNA ligase</fullName>
        <ecNumber evidence="1">6.1.1.17</ecNumber>
    </recommendedName>
    <alternativeName>
        <fullName evidence="1">Glutamyl-tRNA synthetase</fullName>
        <shortName evidence="1">GluRS</shortName>
    </alternativeName>
</protein>
<sequence>MAQSAERPRPYAFMTANATRPVRTRFAPSPTGFLHLGGARTALFSWAFARHHQGVFVLRIEDTDVERSTPEAVQAILDSMDWLGMQPDEGPFYQMKRMDRYAEVLAGMLEAGTAYHCYCSPEEVDAMREAARAKGLKPRYDGTWRPEPGKTLPPVPADRKPVIRFRNPIDGATSWNDMVKGPISFDNGELDDLIIARPDGTPTYNFCVVVDDWDMGITHVLRGDDHVNNTPRQINILRALGATLPEYGHVPMILGPDGEKLSKRHGAVNVMEYDAQGYLPEAMVNYLARLGWSHGDDELFTREQLVEWFDTRHLSKSASQWDPKKLNWVNAHYIKGMDDAELAGRVAPRVERRGGKPQAADLPAIMGLLKDRAETLEQLAEDAMLFCGEYQPAPAELAAQHLTETARAALADFAARARDTEWNRAAISALIKAVLADRGLKMPQLGIPLRVAVTGRAQTPAVDAVLELLGKETVLARLQAL</sequence>
<feature type="chain" id="PRO_0000119516" description="Glutamate--tRNA ligase">
    <location>
        <begin position="1"/>
        <end position="481"/>
    </location>
</feature>
<feature type="region of interest" description="Disordered" evidence="2">
    <location>
        <begin position="139"/>
        <end position="159"/>
    </location>
</feature>
<feature type="short sequence motif" description="'HIGH' region" evidence="1">
    <location>
        <begin position="28"/>
        <end position="38"/>
    </location>
</feature>
<feature type="short sequence motif" description="'KMSKS' region" evidence="1">
    <location>
        <begin position="260"/>
        <end position="264"/>
    </location>
</feature>
<feature type="compositionally biased region" description="Basic and acidic residues" evidence="2">
    <location>
        <begin position="139"/>
        <end position="148"/>
    </location>
</feature>
<feature type="binding site" evidence="1">
    <location>
        <position position="263"/>
    </location>
    <ligand>
        <name>ATP</name>
        <dbReference type="ChEBI" id="CHEBI:30616"/>
    </ligand>
</feature>
<comment type="function">
    <text evidence="1">Catalyzes the attachment of glutamate to tRNA(Glu) in a two-step reaction: glutamate is first activated by ATP to form Glu-AMP and then transferred to the acceptor end of tRNA(Glu).</text>
</comment>
<comment type="catalytic activity">
    <reaction evidence="1">
        <text>tRNA(Glu) + L-glutamate + ATP = L-glutamyl-tRNA(Glu) + AMP + diphosphate</text>
        <dbReference type="Rhea" id="RHEA:23540"/>
        <dbReference type="Rhea" id="RHEA-COMP:9663"/>
        <dbReference type="Rhea" id="RHEA-COMP:9680"/>
        <dbReference type="ChEBI" id="CHEBI:29985"/>
        <dbReference type="ChEBI" id="CHEBI:30616"/>
        <dbReference type="ChEBI" id="CHEBI:33019"/>
        <dbReference type="ChEBI" id="CHEBI:78442"/>
        <dbReference type="ChEBI" id="CHEBI:78520"/>
        <dbReference type="ChEBI" id="CHEBI:456215"/>
        <dbReference type="EC" id="6.1.1.17"/>
    </reaction>
</comment>
<comment type="subunit">
    <text evidence="1">Monomer.</text>
</comment>
<comment type="subcellular location">
    <subcellularLocation>
        <location evidence="1">Cytoplasm</location>
    </subcellularLocation>
</comment>
<comment type="similarity">
    <text evidence="1">Belongs to the class-I aminoacyl-tRNA synthetase family. Glutamate--tRNA ligase type 1 subfamily.</text>
</comment>
<dbReference type="EC" id="6.1.1.17" evidence="1"/>
<dbReference type="EMBL" id="BX640450">
    <property type="protein sequence ID" value="CAE34734.1"/>
    <property type="molecule type" value="Genomic_DNA"/>
</dbReference>
<dbReference type="RefSeq" id="WP_003814917.1">
    <property type="nucleotide sequence ID" value="NC_002927.3"/>
</dbReference>
<dbReference type="SMR" id="Q7WFA9"/>
<dbReference type="GeneID" id="69602902"/>
<dbReference type="KEGG" id="bbr:BB4371"/>
<dbReference type="eggNOG" id="COG0008">
    <property type="taxonomic scope" value="Bacteria"/>
</dbReference>
<dbReference type="HOGENOM" id="CLU_015768_6_3_4"/>
<dbReference type="Proteomes" id="UP000001027">
    <property type="component" value="Chromosome"/>
</dbReference>
<dbReference type="GO" id="GO:0005829">
    <property type="term" value="C:cytosol"/>
    <property type="evidence" value="ECO:0007669"/>
    <property type="project" value="TreeGrafter"/>
</dbReference>
<dbReference type="GO" id="GO:0005524">
    <property type="term" value="F:ATP binding"/>
    <property type="evidence" value="ECO:0007669"/>
    <property type="project" value="UniProtKB-UniRule"/>
</dbReference>
<dbReference type="GO" id="GO:0004818">
    <property type="term" value="F:glutamate-tRNA ligase activity"/>
    <property type="evidence" value="ECO:0007669"/>
    <property type="project" value="UniProtKB-UniRule"/>
</dbReference>
<dbReference type="GO" id="GO:0000049">
    <property type="term" value="F:tRNA binding"/>
    <property type="evidence" value="ECO:0007669"/>
    <property type="project" value="InterPro"/>
</dbReference>
<dbReference type="GO" id="GO:0008270">
    <property type="term" value="F:zinc ion binding"/>
    <property type="evidence" value="ECO:0007669"/>
    <property type="project" value="InterPro"/>
</dbReference>
<dbReference type="GO" id="GO:0006424">
    <property type="term" value="P:glutamyl-tRNA aminoacylation"/>
    <property type="evidence" value="ECO:0007669"/>
    <property type="project" value="UniProtKB-UniRule"/>
</dbReference>
<dbReference type="CDD" id="cd00808">
    <property type="entry name" value="GluRS_core"/>
    <property type="match status" value="1"/>
</dbReference>
<dbReference type="FunFam" id="3.40.50.620:FF:000007">
    <property type="entry name" value="Glutamate--tRNA ligase"/>
    <property type="match status" value="1"/>
</dbReference>
<dbReference type="Gene3D" id="1.10.10.350">
    <property type="match status" value="1"/>
</dbReference>
<dbReference type="Gene3D" id="3.40.50.620">
    <property type="entry name" value="HUPs"/>
    <property type="match status" value="1"/>
</dbReference>
<dbReference type="HAMAP" id="MF_00022">
    <property type="entry name" value="Glu_tRNA_synth_type1"/>
    <property type="match status" value="1"/>
</dbReference>
<dbReference type="InterPro" id="IPR045462">
    <property type="entry name" value="aa-tRNA-synth_I_cd-bd"/>
</dbReference>
<dbReference type="InterPro" id="IPR020751">
    <property type="entry name" value="aa-tRNA-synth_I_codon-bd_sub2"/>
</dbReference>
<dbReference type="InterPro" id="IPR001412">
    <property type="entry name" value="aa-tRNA-synth_I_CS"/>
</dbReference>
<dbReference type="InterPro" id="IPR008925">
    <property type="entry name" value="aa_tRNA-synth_I_cd-bd_sf"/>
</dbReference>
<dbReference type="InterPro" id="IPR004527">
    <property type="entry name" value="Glu-tRNA-ligase_bac/mito"/>
</dbReference>
<dbReference type="InterPro" id="IPR000924">
    <property type="entry name" value="Glu/Gln-tRNA-synth"/>
</dbReference>
<dbReference type="InterPro" id="IPR020058">
    <property type="entry name" value="Glu/Gln-tRNA-synth_Ib_cat-dom"/>
</dbReference>
<dbReference type="InterPro" id="IPR049940">
    <property type="entry name" value="GluQ/Sye"/>
</dbReference>
<dbReference type="InterPro" id="IPR033910">
    <property type="entry name" value="GluRS_core"/>
</dbReference>
<dbReference type="InterPro" id="IPR014729">
    <property type="entry name" value="Rossmann-like_a/b/a_fold"/>
</dbReference>
<dbReference type="NCBIfam" id="TIGR00464">
    <property type="entry name" value="gltX_bact"/>
    <property type="match status" value="1"/>
</dbReference>
<dbReference type="PANTHER" id="PTHR43311">
    <property type="entry name" value="GLUTAMATE--TRNA LIGASE"/>
    <property type="match status" value="1"/>
</dbReference>
<dbReference type="PANTHER" id="PTHR43311:SF2">
    <property type="entry name" value="GLUTAMATE--TRNA LIGASE, MITOCHONDRIAL-RELATED"/>
    <property type="match status" value="1"/>
</dbReference>
<dbReference type="Pfam" id="PF19269">
    <property type="entry name" value="Anticodon_2"/>
    <property type="match status" value="1"/>
</dbReference>
<dbReference type="Pfam" id="PF00749">
    <property type="entry name" value="tRNA-synt_1c"/>
    <property type="match status" value="1"/>
</dbReference>
<dbReference type="PRINTS" id="PR00987">
    <property type="entry name" value="TRNASYNTHGLU"/>
</dbReference>
<dbReference type="SUPFAM" id="SSF48163">
    <property type="entry name" value="An anticodon-binding domain of class I aminoacyl-tRNA synthetases"/>
    <property type="match status" value="1"/>
</dbReference>
<dbReference type="SUPFAM" id="SSF52374">
    <property type="entry name" value="Nucleotidylyl transferase"/>
    <property type="match status" value="1"/>
</dbReference>
<dbReference type="PROSITE" id="PS00178">
    <property type="entry name" value="AA_TRNA_LIGASE_I"/>
    <property type="match status" value="1"/>
</dbReference>
<organism>
    <name type="scientific">Bordetella bronchiseptica (strain ATCC BAA-588 / NCTC 13252 / RB50)</name>
    <name type="common">Alcaligenes bronchisepticus</name>
    <dbReference type="NCBI Taxonomy" id="257310"/>
    <lineage>
        <taxon>Bacteria</taxon>
        <taxon>Pseudomonadati</taxon>
        <taxon>Pseudomonadota</taxon>
        <taxon>Betaproteobacteria</taxon>
        <taxon>Burkholderiales</taxon>
        <taxon>Alcaligenaceae</taxon>
        <taxon>Bordetella</taxon>
    </lineage>
</organism>